<accession>Q66GR6</accession>
<accession>A8MR64</accession>
<accession>O64508</accession>
<accession>Q0WLJ4</accession>
<organism>
    <name type="scientific">Arabidopsis thaliana</name>
    <name type="common">Mouse-ear cress</name>
    <dbReference type="NCBI Taxonomy" id="3702"/>
    <lineage>
        <taxon>Eukaryota</taxon>
        <taxon>Viridiplantae</taxon>
        <taxon>Streptophyta</taxon>
        <taxon>Embryophyta</taxon>
        <taxon>Tracheophyta</taxon>
        <taxon>Spermatophyta</taxon>
        <taxon>Magnoliopsida</taxon>
        <taxon>eudicotyledons</taxon>
        <taxon>Gunneridae</taxon>
        <taxon>Pentapetalae</taxon>
        <taxon>rosids</taxon>
        <taxon>malvids</taxon>
        <taxon>Brassicales</taxon>
        <taxon>Brassicaceae</taxon>
        <taxon>Camelineae</taxon>
        <taxon>Arabidopsis</taxon>
    </lineage>
</organism>
<proteinExistence type="evidence at protein level"/>
<comment type="function">
    <text evidence="4 5 6 7">Single-stranded DNA-binding protein that functions in both chloroplasts and nucleus. In chloroplasts, maintains plastid genome stability by preventing break-induced and short homology-dependent illegitimate recombinations. In the nucleus, is recruited to a distal element upstream of the kinesin KP1 to mediate the transcriptional repression of KP1. Can bind double-stranded DNA in vivo.</text>
</comment>
<comment type="subunit">
    <text evidence="1">Homotetramer.</text>
</comment>
<comment type="subcellular location">
    <subcellularLocation>
        <location evidence="3">Plastid</location>
        <location evidence="3">Chloroplast</location>
    </subcellularLocation>
    <subcellularLocation>
        <location evidence="1">Nucleus</location>
    </subcellularLocation>
    <text evidence="1">Can localize to both chloroplast and nucleus.</text>
</comment>
<comment type="alternative products">
    <event type="alternative splicing"/>
    <isoform>
        <id>Q66GR6-1</id>
        <name>1</name>
        <sequence type="displayed"/>
    </isoform>
    <isoform>
        <id>Q66GR6-2</id>
        <name>2</name>
        <sequence type="described" ref="VSP_044508"/>
    </isoform>
</comment>
<comment type="induction">
    <text evidence="5">By salicylic acid (SA).</text>
</comment>
<comment type="disruption phenotype">
    <text evidence="4">No visible phenotype under normal growth conditions.</text>
</comment>
<comment type="miscellaneous">
    <molecule>Isoform 2</molecule>
    <text evidence="8">May be due to a competing acceptor splice site.</text>
</comment>
<comment type="similarity">
    <text evidence="8">Belongs to the Whirly family.</text>
</comment>
<comment type="sequence caution" evidence="8">
    <conflict type="erroneous gene model prediction">
        <sequence resource="EMBL-CDS" id="AAC05348"/>
    </conflict>
</comment>
<reference key="1">
    <citation type="journal article" date="1999" name="Nature">
        <title>Sequence and analysis of chromosome 2 of the plant Arabidopsis thaliana.</title>
        <authorList>
            <person name="Lin X."/>
            <person name="Kaul S."/>
            <person name="Rounsley S.D."/>
            <person name="Shea T.P."/>
            <person name="Benito M.-I."/>
            <person name="Town C.D."/>
            <person name="Fujii C.Y."/>
            <person name="Mason T.M."/>
            <person name="Bowman C.L."/>
            <person name="Barnstead M.E."/>
            <person name="Feldblyum T.V."/>
            <person name="Buell C.R."/>
            <person name="Ketchum K.A."/>
            <person name="Lee J.J."/>
            <person name="Ronning C.M."/>
            <person name="Koo H.L."/>
            <person name="Moffat K.S."/>
            <person name="Cronin L.A."/>
            <person name="Shen M."/>
            <person name="Pai G."/>
            <person name="Van Aken S."/>
            <person name="Umayam L."/>
            <person name="Tallon L.J."/>
            <person name="Gill J.E."/>
            <person name="Adams M.D."/>
            <person name="Carrera A.J."/>
            <person name="Creasy T.H."/>
            <person name="Goodman H.M."/>
            <person name="Somerville C.R."/>
            <person name="Copenhaver G.P."/>
            <person name="Preuss D."/>
            <person name="Nierman W.C."/>
            <person name="White O."/>
            <person name="Eisen J.A."/>
            <person name="Salzberg S.L."/>
            <person name="Fraser C.M."/>
            <person name="Venter J.C."/>
        </authorList>
    </citation>
    <scope>NUCLEOTIDE SEQUENCE [LARGE SCALE GENOMIC DNA]</scope>
    <source>
        <strain>cv. Columbia</strain>
    </source>
</reference>
<reference key="2">
    <citation type="journal article" date="2017" name="Plant J.">
        <title>Araport11: a complete reannotation of the Arabidopsis thaliana reference genome.</title>
        <authorList>
            <person name="Cheng C.Y."/>
            <person name="Krishnakumar V."/>
            <person name="Chan A.P."/>
            <person name="Thibaud-Nissen F."/>
            <person name="Schobel S."/>
            <person name="Town C.D."/>
        </authorList>
    </citation>
    <scope>GENOME REANNOTATION</scope>
    <source>
        <strain>cv. Columbia</strain>
    </source>
</reference>
<reference key="3">
    <citation type="submission" date="2004-08" db="EMBL/GenBank/DDBJ databases">
        <title>Arabidopsis ORF clones.</title>
        <authorList>
            <person name="Kim C.J."/>
            <person name="Chen H."/>
            <person name="Cheuk R.F."/>
            <person name="Shinn P."/>
            <person name="Ecker J.R."/>
        </authorList>
    </citation>
    <scope>NUCLEOTIDE SEQUENCE [LARGE SCALE MRNA] (ISOFORM 1)</scope>
    <source>
        <strain>cv. Columbia</strain>
    </source>
</reference>
<reference key="4">
    <citation type="submission" date="2006-07" db="EMBL/GenBank/DDBJ databases">
        <title>Large-scale analysis of RIKEN Arabidopsis full-length (RAFL) cDNAs.</title>
        <authorList>
            <person name="Totoki Y."/>
            <person name="Seki M."/>
            <person name="Ishida J."/>
            <person name="Nakajima M."/>
            <person name="Enju A."/>
            <person name="Kamiya A."/>
            <person name="Narusaka M."/>
            <person name="Shin-i T."/>
            <person name="Nakagawa M."/>
            <person name="Sakamoto N."/>
            <person name="Oishi K."/>
            <person name="Kohara Y."/>
            <person name="Kobayashi M."/>
            <person name="Toyoda A."/>
            <person name="Sakaki Y."/>
            <person name="Sakurai T."/>
            <person name="Iida K."/>
            <person name="Akiyama K."/>
            <person name="Satou M."/>
            <person name="Toyoda T."/>
            <person name="Konagaya A."/>
            <person name="Carninci P."/>
            <person name="Kawai J."/>
            <person name="Hayashizaki Y."/>
            <person name="Shinozaki K."/>
        </authorList>
    </citation>
    <scope>NUCLEOTIDE SEQUENCE [LARGE SCALE MRNA] (ISOFORM 1)</scope>
    <source>
        <strain>cv. Columbia</strain>
    </source>
</reference>
<reference key="5">
    <citation type="journal article" date="2005" name="FEBS Lett.">
        <title>DNA-binding proteins of the Whirly family in Arabidopsis thaliana are targeted to the organelles.</title>
        <authorList>
            <person name="Krause K."/>
            <person name="Kilbienski I."/>
            <person name="Mulisch M."/>
            <person name="Roediger A."/>
            <person name="Schaefer A."/>
            <person name="Krupinska K."/>
        </authorList>
    </citation>
    <scope>SUBCELLULAR LOCATION</scope>
    <scope>GENE FAMILY</scope>
    <scope>NOMENCLATURE</scope>
</reference>
<reference key="6">
    <citation type="journal article" date="2005" name="Trends Plant Sci.">
        <title>Whirly transcription factors: defense gene regulation and beyond.</title>
        <authorList>
            <person name="Desveaux D."/>
            <person name="Marechal A."/>
            <person name="Brisson N."/>
        </authorList>
    </citation>
    <scope>GENE FAMILY</scope>
</reference>
<reference key="7">
    <citation type="journal article" date="2009" name="Plant Mol. Biol.">
        <title>Recruitment of AtWHY1 and AtWHY3 by a distal element upstream of the kinesin gene AtKP1 to mediate transcriptional repression.</title>
        <authorList>
            <person name="Xiong J.Y."/>
            <person name="Lai C.X."/>
            <person name="Qu Z."/>
            <person name="Yang X.Y."/>
            <person name="Qin X.H."/>
            <person name="Liu G.Q."/>
        </authorList>
    </citation>
    <scope>FUNCTION</scope>
    <scope>INDUCTION BY SALICYLIC ACID</scope>
    <scope>IDENTIFICATION BY MASS SPECTROMETRY</scope>
</reference>
<reference key="8">
    <citation type="journal article" date="2009" name="Proc. Natl. Acad. Sci. U.S.A.">
        <title>Whirly proteins maintain plastid genome stability in Arabidopsis.</title>
        <authorList>
            <person name="Marechal A."/>
            <person name="Parent J.S."/>
            <person name="Veronneau-Lafortune F."/>
            <person name="Joyeux A."/>
            <person name="Lang B.F."/>
            <person name="Brisson N."/>
        </authorList>
    </citation>
    <scope>FUNCTION</scope>
    <scope>DISRUPTION PHENOTYPE</scope>
</reference>
<reference key="9">
    <citation type="journal article" date="2010" name="Plant Cell">
        <title>Crystal structures of DNA-Whirly complexes and their role in Arabidopsis organelle genome repair.</title>
        <authorList>
            <person name="Cappadocia L."/>
            <person name="Marechal A."/>
            <person name="Parent J.S."/>
            <person name="Lepage E."/>
            <person name="Sygusch J."/>
            <person name="Brisson N."/>
        </authorList>
    </citation>
    <scope>FUNCTION</scope>
</reference>
<reference key="10">
    <citation type="journal article" date="2012" name="Nucleic Acids Res.">
        <title>A conserved lysine residue of plant Whirly proteins is necessary for higher order protein assembly and protection against DNA damage.</title>
        <authorList>
            <person name="Cappadocia L."/>
            <person name="Parent J.S."/>
            <person name="Zampini E."/>
            <person name="Lepage E."/>
            <person name="Sygusch J."/>
            <person name="Brisson N."/>
        </authorList>
    </citation>
    <scope>FUNCTION</scope>
    <scope>MUTAGENESIS OF LYS-95</scope>
</reference>
<feature type="transit peptide" description="Chloroplast" evidence="2">
    <location>
        <begin position="1"/>
        <end position="75"/>
    </location>
</feature>
<feature type="chain" id="PRO_0000420449" description="Single-stranded DNA-binding protein WHY3, chloroplastic">
    <location>
        <begin position="76"/>
        <end position="268"/>
    </location>
</feature>
<feature type="region of interest" description="Required for ssDNA binding" evidence="1">
    <location>
        <begin position="93"/>
        <end position="98"/>
    </location>
</feature>
<feature type="short sequence motif" description="Nuclear localization signal" evidence="2">
    <location>
        <begin position="171"/>
        <end position="185"/>
    </location>
</feature>
<feature type="splice variant" id="VSP_044508" description="In isoform 2." evidence="8">
    <location>
        <position position="175"/>
    </location>
</feature>
<feature type="mutagenesis site" description="No effect on DNA binding. Affects its function in DNA repair." evidence="7">
    <original>K</original>
    <variation>A</variation>
    <location>
        <position position="95"/>
    </location>
</feature>
<feature type="sequence conflict" description="In Ref. 4; BAF02013." evidence="8" ref="4">
    <original>A</original>
    <variation>T</variation>
    <location>
        <position position="40"/>
    </location>
</feature>
<feature type="sequence conflict" description="In Ref. 4; BAF02013." evidence="8" ref="4">
    <original>RKQ</original>
    <variation>KKR</variation>
    <location>
        <begin position="140"/>
        <end position="142"/>
    </location>
</feature>
<feature type="strand" evidence="9">
    <location>
        <begin position="89"/>
        <end position="92"/>
    </location>
</feature>
<feature type="strand" evidence="9">
    <location>
        <begin position="94"/>
        <end position="103"/>
    </location>
</feature>
<feature type="strand" evidence="9">
    <location>
        <begin position="106"/>
        <end position="109"/>
    </location>
</feature>
<feature type="strand" evidence="9">
    <location>
        <begin position="115"/>
        <end position="119"/>
    </location>
</feature>
<feature type="strand" evidence="9">
    <location>
        <begin position="122"/>
        <end position="132"/>
    </location>
</feature>
<feature type="helix" evidence="9">
    <location>
        <begin position="138"/>
        <end position="140"/>
    </location>
</feature>
<feature type="strand" evidence="9">
    <location>
        <begin position="142"/>
        <end position="146"/>
    </location>
</feature>
<feature type="helix" evidence="9">
    <location>
        <begin position="148"/>
        <end position="155"/>
    </location>
</feature>
<feature type="strand" evidence="9">
    <location>
        <begin position="163"/>
        <end position="167"/>
    </location>
</feature>
<feature type="strand" evidence="9">
    <location>
        <begin position="171"/>
        <end position="173"/>
    </location>
</feature>
<feature type="turn" evidence="9">
    <location>
        <begin position="176"/>
        <end position="178"/>
    </location>
</feature>
<feature type="strand" evidence="9">
    <location>
        <begin position="179"/>
        <end position="188"/>
    </location>
</feature>
<feature type="strand" evidence="9">
    <location>
        <begin position="192"/>
        <end position="203"/>
    </location>
</feature>
<feature type="turn" evidence="9">
    <location>
        <begin position="204"/>
        <end position="207"/>
    </location>
</feature>
<feature type="strand" evidence="9">
    <location>
        <begin position="208"/>
        <end position="217"/>
    </location>
</feature>
<feature type="helix" evidence="9">
    <location>
        <begin position="218"/>
        <end position="235"/>
    </location>
</feature>
<feature type="helix" evidence="9">
    <location>
        <begin position="238"/>
        <end position="242"/>
    </location>
</feature>
<name>WHY3_ARATH</name>
<gene>
    <name type="primary">WHY3</name>
    <name type="synonym">PTAC11</name>
    <name type="ordered locus">At2g02740</name>
    <name type="ORF">T20F6.12</name>
</gene>
<sequence length="268" mass="29728">MSQLLSSPPMAVFSKTFINHKFSDARFLSSHSILTSGGFAGKIIPLKPTARLKLTVKSRQSDYFEKQRFGDSSSSQNAEVSSPRFYVGHSIYKGKAALTIEPRAPEFVALESGAFKLTKEGFLLLQFAPAAGVRQYDWSRKQVFSLSVTEIGNLVSLGPRESCEFFHDPFKGKGSDEGKVRKVLKVEPLPDGSGRFFNLSVQNKLLNVDESVYIPITKAEFAVLISAFNFVLPHLIGWSAFANSIKPEDSNRLNNASPKYGGDYEWSR</sequence>
<keyword id="KW-0002">3D-structure</keyword>
<keyword id="KW-0025">Alternative splicing</keyword>
<keyword id="KW-0150">Chloroplast</keyword>
<keyword id="KW-0227">DNA damage</keyword>
<keyword id="KW-0234">DNA repair</keyword>
<keyword id="KW-0238">DNA-binding</keyword>
<keyword id="KW-0539">Nucleus</keyword>
<keyword id="KW-0934">Plastid</keyword>
<keyword id="KW-1185">Reference proteome</keyword>
<keyword id="KW-0804">Transcription</keyword>
<keyword id="KW-0805">Transcription regulation</keyword>
<keyword id="KW-0809">Transit peptide</keyword>
<dbReference type="EMBL" id="AC002521">
    <property type="protein sequence ID" value="AAC05348.1"/>
    <property type="status" value="ALT_SEQ"/>
    <property type="molecule type" value="Genomic_DNA"/>
</dbReference>
<dbReference type="EMBL" id="CP002685">
    <property type="protein sequence ID" value="AEC05618.1"/>
    <property type="molecule type" value="Genomic_DNA"/>
</dbReference>
<dbReference type="EMBL" id="BT015336">
    <property type="protein sequence ID" value="AAU05459.1"/>
    <property type="molecule type" value="mRNA"/>
</dbReference>
<dbReference type="EMBL" id="BT015641">
    <property type="protein sequence ID" value="AAU15140.1"/>
    <property type="molecule type" value="mRNA"/>
</dbReference>
<dbReference type="EMBL" id="AK230205">
    <property type="protein sequence ID" value="BAF02013.1"/>
    <property type="molecule type" value="mRNA"/>
</dbReference>
<dbReference type="PIR" id="T00854">
    <property type="entry name" value="T00854"/>
</dbReference>
<dbReference type="RefSeq" id="NP_178377.2">
    <molecule id="Q66GR6-1"/>
    <property type="nucleotide sequence ID" value="NM_126329.4"/>
</dbReference>
<dbReference type="PDB" id="4KOQ">
    <property type="method" value="X-ray"/>
    <property type="resolution" value="1.85 A"/>
    <property type="chains" value="A=78-246"/>
</dbReference>
<dbReference type="PDBsum" id="4KOQ"/>
<dbReference type="SMR" id="Q66GR6"/>
<dbReference type="BioGRID" id="205">
    <property type="interactions" value="4"/>
</dbReference>
<dbReference type="ComplexPortal" id="CPX-3586">
    <property type="entry name" value="WHY3 complex"/>
</dbReference>
<dbReference type="FunCoup" id="Q66GR6">
    <property type="interactions" value="411"/>
</dbReference>
<dbReference type="IntAct" id="Q66GR6">
    <property type="interactions" value="3"/>
</dbReference>
<dbReference type="STRING" id="3702.Q66GR6"/>
<dbReference type="PaxDb" id="3702-AT2G02740.1"/>
<dbReference type="ProteomicsDB" id="242547">
    <molecule id="Q66GR6-1"/>
</dbReference>
<dbReference type="EnsemblPlants" id="AT2G02740.1">
    <molecule id="Q66GR6-1"/>
    <property type="protein sequence ID" value="AT2G02740.1"/>
    <property type="gene ID" value="AT2G02740"/>
</dbReference>
<dbReference type="GeneID" id="814803"/>
<dbReference type="Gramene" id="AT2G02740.1">
    <molecule id="Q66GR6-1"/>
    <property type="protein sequence ID" value="AT2G02740.1"/>
    <property type="gene ID" value="AT2G02740"/>
</dbReference>
<dbReference type="KEGG" id="ath:AT2G02740"/>
<dbReference type="Araport" id="AT2G02740"/>
<dbReference type="TAIR" id="AT2G02740">
    <property type="gene designation" value="WHY3"/>
</dbReference>
<dbReference type="eggNOG" id="ENOG502QRRY">
    <property type="taxonomic scope" value="Eukaryota"/>
</dbReference>
<dbReference type="HOGENOM" id="CLU_062935_1_0_1"/>
<dbReference type="InParanoid" id="Q66GR6"/>
<dbReference type="OMA" id="IGWSAFA"/>
<dbReference type="OrthoDB" id="511009at2759"/>
<dbReference type="PhylomeDB" id="Q66GR6"/>
<dbReference type="CD-CODE" id="4299E36E">
    <property type="entry name" value="Nucleolus"/>
</dbReference>
<dbReference type="EvolutionaryTrace" id="Q66GR6"/>
<dbReference type="PRO" id="PR:Q66GR6"/>
<dbReference type="Proteomes" id="UP000006548">
    <property type="component" value="Chromosome 2"/>
</dbReference>
<dbReference type="ExpressionAtlas" id="Q66GR6">
    <property type="expression patterns" value="baseline and differential"/>
</dbReference>
<dbReference type="GO" id="GO:0009507">
    <property type="term" value="C:chloroplast"/>
    <property type="evidence" value="ECO:0000314"/>
    <property type="project" value="ComplexPortal"/>
</dbReference>
<dbReference type="GO" id="GO:0042644">
    <property type="term" value="C:chloroplast nucleoid"/>
    <property type="evidence" value="ECO:0007005"/>
    <property type="project" value="TAIR"/>
</dbReference>
<dbReference type="GO" id="GO:0009570">
    <property type="term" value="C:chloroplast stroma"/>
    <property type="evidence" value="ECO:0007005"/>
    <property type="project" value="TAIR"/>
</dbReference>
<dbReference type="GO" id="GO:1990391">
    <property type="term" value="C:DNA repair complex"/>
    <property type="evidence" value="ECO:0000353"/>
    <property type="project" value="ComplexPortal"/>
</dbReference>
<dbReference type="GO" id="GO:0005739">
    <property type="term" value="C:mitochondrion"/>
    <property type="evidence" value="ECO:0007005"/>
    <property type="project" value="TAIR"/>
</dbReference>
<dbReference type="GO" id="GO:0003677">
    <property type="term" value="F:DNA binding"/>
    <property type="evidence" value="ECO:0000314"/>
    <property type="project" value="TAIR"/>
</dbReference>
<dbReference type="GO" id="GO:0003729">
    <property type="term" value="F:mRNA binding"/>
    <property type="evidence" value="ECO:0000314"/>
    <property type="project" value="TAIR"/>
</dbReference>
<dbReference type="GO" id="GO:0003697">
    <property type="term" value="F:single-stranded DNA binding"/>
    <property type="evidence" value="ECO:0007669"/>
    <property type="project" value="InterPro"/>
</dbReference>
<dbReference type="GO" id="GO:0006952">
    <property type="term" value="P:defense response"/>
    <property type="evidence" value="ECO:0000304"/>
    <property type="project" value="TAIR"/>
</dbReference>
<dbReference type="GO" id="GO:0006281">
    <property type="term" value="P:DNA repair"/>
    <property type="evidence" value="ECO:0000315"/>
    <property type="project" value="TAIR"/>
</dbReference>
<dbReference type="GO" id="GO:0006355">
    <property type="term" value="P:regulation of DNA-templated transcription"/>
    <property type="evidence" value="ECO:0007669"/>
    <property type="project" value="InterPro"/>
</dbReference>
<dbReference type="GO" id="GO:0009863">
    <property type="term" value="P:salicylic acid mediated signaling pathway"/>
    <property type="evidence" value="ECO:0000314"/>
    <property type="project" value="ComplexPortal"/>
</dbReference>
<dbReference type="FunFam" id="2.30.31.10:FF:000002">
    <property type="entry name" value="Single-stranded DNA-binding protein WHY2, mitochondrial"/>
    <property type="match status" value="1"/>
</dbReference>
<dbReference type="Gene3D" id="2.30.31.10">
    <property type="entry name" value="Transcriptional Coactivator Pc4, Chain A"/>
    <property type="match status" value="1"/>
</dbReference>
<dbReference type="InterPro" id="IPR009044">
    <property type="entry name" value="ssDNA-bd_transcriptional_reg"/>
</dbReference>
<dbReference type="InterPro" id="IPR013742">
    <property type="entry name" value="Whirly"/>
</dbReference>
<dbReference type="PANTHER" id="PTHR31745">
    <property type="entry name" value="SINGLE-STRANDED DNA-BINDING PROTEIN WHY2, MITOCHONDRIAL"/>
    <property type="match status" value="1"/>
</dbReference>
<dbReference type="PANTHER" id="PTHR31745:SF5">
    <property type="entry name" value="SINGLE-STRANDED DNA-BINDING PROTEIN WHY3, CHLOROPLASTIC"/>
    <property type="match status" value="1"/>
</dbReference>
<dbReference type="Pfam" id="PF08536">
    <property type="entry name" value="Whirly"/>
    <property type="match status" value="1"/>
</dbReference>
<dbReference type="SUPFAM" id="SSF54447">
    <property type="entry name" value="ssDNA-binding transcriptional regulator domain"/>
    <property type="match status" value="1"/>
</dbReference>
<protein>
    <recommendedName>
        <fullName>Single-stranded DNA-binding protein WHY3, chloroplastic</fullName>
    </recommendedName>
    <alternativeName>
        <fullName>Protein PLASTID TRANSCRIPTIONALLY ACTIVE 11</fullName>
    </alternativeName>
    <alternativeName>
        <fullName>Protein WHIRLY 3</fullName>
        <shortName>AtWHY3</shortName>
    </alternativeName>
</protein>
<evidence type="ECO:0000250" key="1"/>
<evidence type="ECO:0000255" key="2"/>
<evidence type="ECO:0000269" key="3">
    <source>
    </source>
</evidence>
<evidence type="ECO:0000269" key="4">
    <source>
    </source>
</evidence>
<evidence type="ECO:0000269" key="5">
    <source>
    </source>
</evidence>
<evidence type="ECO:0000269" key="6">
    <source>
    </source>
</evidence>
<evidence type="ECO:0000269" key="7">
    <source>
    </source>
</evidence>
<evidence type="ECO:0000305" key="8"/>
<evidence type="ECO:0007829" key="9">
    <source>
        <dbReference type="PDB" id="4KOQ"/>
    </source>
</evidence>